<accession>Q4K843</accession>
<proteinExistence type="inferred from homology"/>
<feature type="chain" id="PRO_0000075177" description="Alanine--tRNA ligase">
    <location>
        <begin position="1"/>
        <end position="874"/>
    </location>
</feature>
<feature type="binding site" evidence="1">
    <location>
        <position position="562"/>
    </location>
    <ligand>
        <name>Zn(2+)</name>
        <dbReference type="ChEBI" id="CHEBI:29105"/>
    </ligand>
</feature>
<feature type="binding site" evidence="1">
    <location>
        <position position="566"/>
    </location>
    <ligand>
        <name>Zn(2+)</name>
        <dbReference type="ChEBI" id="CHEBI:29105"/>
    </ligand>
</feature>
<feature type="binding site" evidence="1">
    <location>
        <position position="665"/>
    </location>
    <ligand>
        <name>Zn(2+)</name>
        <dbReference type="ChEBI" id="CHEBI:29105"/>
    </ligand>
</feature>
<feature type="binding site" evidence="1">
    <location>
        <position position="669"/>
    </location>
    <ligand>
        <name>Zn(2+)</name>
        <dbReference type="ChEBI" id="CHEBI:29105"/>
    </ligand>
</feature>
<comment type="function">
    <text evidence="1">Catalyzes the attachment of alanine to tRNA(Ala) in a two-step reaction: alanine is first activated by ATP to form Ala-AMP and then transferred to the acceptor end of tRNA(Ala). Also edits incorrectly charged Ser-tRNA(Ala) and Gly-tRNA(Ala) via its editing domain.</text>
</comment>
<comment type="catalytic activity">
    <reaction evidence="1">
        <text>tRNA(Ala) + L-alanine + ATP = L-alanyl-tRNA(Ala) + AMP + diphosphate</text>
        <dbReference type="Rhea" id="RHEA:12540"/>
        <dbReference type="Rhea" id="RHEA-COMP:9657"/>
        <dbReference type="Rhea" id="RHEA-COMP:9923"/>
        <dbReference type="ChEBI" id="CHEBI:30616"/>
        <dbReference type="ChEBI" id="CHEBI:33019"/>
        <dbReference type="ChEBI" id="CHEBI:57972"/>
        <dbReference type="ChEBI" id="CHEBI:78442"/>
        <dbReference type="ChEBI" id="CHEBI:78497"/>
        <dbReference type="ChEBI" id="CHEBI:456215"/>
        <dbReference type="EC" id="6.1.1.7"/>
    </reaction>
</comment>
<comment type="cofactor">
    <cofactor evidence="1">
        <name>Zn(2+)</name>
        <dbReference type="ChEBI" id="CHEBI:29105"/>
    </cofactor>
    <text evidence="1">Binds 1 zinc ion per subunit.</text>
</comment>
<comment type="subcellular location">
    <subcellularLocation>
        <location evidence="1">Cytoplasm</location>
    </subcellularLocation>
</comment>
<comment type="domain">
    <text evidence="1">Consists of three domains; the N-terminal catalytic domain, the editing domain and the C-terminal C-Ala domain. The editing domain removes incorrectly charged amino acids, while the C-Ala domain, along with tRNA(Ala), serves as a bridge to cooperatively bring together the editing and aminoacylation centers thus stimulating deacylation of misacylated tRNAs.</text>
</comment>
<comment type="similarity">
    <text evidence="1">Belongs to the class-II aminoacyl-tRNA synthetase family.</text>
</comment>
<sequence length="874" mass="94568">MKSAEIREAFLRFFEEQGHTRVASSSLIPGNDPTLLFTNAGMNQFKDCFLGQEKRAYTRAVSSQKCVRAGGKHNDLENVGYTARHHTFFEMLGNFSFGDYFKRDAITFAWTFLTSDKWLNLPKEKLWVTVYATDDEAYDIWTKEVGVPAERMVRIGDNKGAPYASDNFWTMGDTGPCGPCTEIFYDHGADIWGGPPGSPEEDGDRYIEIWNNVFMQFNRTADGVLHPLPAPSVDTGMGLERISAVLQHVHSNYEIDLFQSLLDAAAKAIGCTNDAQASLKVVADHIRSCGFLIADGVLPSNEGRGYVLRRIIRRACRHGNKLGAKGSFFYQIVAALVAEMGEAFPELKSQQAHIERVLKAEEEQFAKTLEQGLKILEQDLAELKGSVVPGDVVFKLYDTYGFPMDLTGDIARERNLTLDEEGFEREMEAQRVRARSASSFGMDYNSLVKVDVATEFTGYHATSGSAKVVALYKEGQSVDMLSEGEEGVVVLDQTPFYAESGGQIGDCGYLQAGNARFDVRDTTKTGGAFLHHGVLAKGSLTVGAPVETQVDAQVRHATSLNHSATHLLHAALRQVLGEHVQQKGSLVDSQRLRFDFSHFEAIKPEQIKALEDIVNAEIRKNTPVETEETDIDTAKKKGAMALFGEKYGDSVRVLSMGGDFSVELCGGIHANRTGDIGLLKITSEGGVASGVRRIEAVTGAAALAYLNAAEEQLKEAATLVKGSRDNLIDKLSAVLERNRLLEKQLEQLQAKAASAAGDDLSAQAADVKGVKVLAARLDGQDGKALLALVDQLKNKLGRAVILLGSVHEEKVVLVAGVTKDLTGQLKAGDLMKQAAAAVGGKGGGRPDMAQGGGVDAAALDAALALTVPFVEQGI</sequence>
<organism>
    <name type="scientific">Pseudomonas fluorescens (strain ATCC BAA-477 / NRRL B-23932 / Pf-5)</name>
    <dbReference type="NCBI Taxonomy" id="220664"/>
    <lineage>
        <taxon>Bacteria</taxon>
        <taxon>Pseudomonadati</taxon>
        <taxon>Pseudomonadota</taxon>
        <taxon>Gammaproteobacteria</taxon>
        <taxon>Pseudomonadales</taxon>
        <taxon>Pseudomonadaceae</taxon>
        <taxon>Pseudomonas</taxon>
    </lineage>
</organism>
<gene>
    <name evidence="1" type="primary">alaS</name>
    <name type="ordered locus">PFL_4506</name>
</gene>
<reference key="1">
    <citation type="journal article" date="2005" name="Nat. Biotechnol.">
        <title>Complete genome sequence of the plant commensal Pseudomonas fluorescens Pf-5.</title>
        <authorList>
            <person name="Paulsen I.T."/>
            <person name="Press C.M."/>
            <person name="Ravel J."/>
            <person name="Kobayashi D.Y."/>
            <person name="Myers G.S.A."/>
            <person name="Mavrodi D.V."/>
            <person name="DeBoy R.T."/>
            <person name="Seshadri R."/>
            <person name="Ren Q."/>
            <person name="Madupu R."/>
            <person name="Dodson R.J."/>
            <person name="Durkin A.S."/>
            <person name="Brinkac L.M."/>
            <person name="Daugherty S.C."/>
            <person name="Sullivan S.A."/>
            <person name="Rosovitz M.J."/>
            <person name="Gwinn M.L."/>
            <person name="Zhou L."/>
            <person name="Schneider D.J."/>
            <person name="Cartinhour S.W."/>
            <person name="Nelson W.C."/>
            <person name="Weidman J."/>
            <person name="Watkins K."/>
            <person name="Tran K."/>
            <person name="Khouri H."/>
            <person name="Pierson E.A."/>
            <person name="Pierson L.S. III"/>
            <person name="Thomashow L.S."/>
            <person name="Loper J.E."/>
        </authorList>
    </citation>
    <scope>NUCLEOTIDE SEQUENCE [LARGE SCALE GENOMIC DNA]</scope>
    <source>
        <strain>ATCC BAA-477 / NRRL B-23932 / Pf-5</strain>
    </source>
</reference>
<keyword id="KW-0030">Aminoacyl-tRNA synthetase</keyword>
<keyword id="KW-0067">ATP-binding</keyword>
<keyword id="KW-0963">Cytoplasm</keyword>
<keyword id="KW-0436">Ligase</keyword>
<keyword id="KW-0479">Metal-binding</keyword>
<keyword id="KW-0547">Nucleotide-binding</keyword>
<keyword id="KW-0648">Protein biosynthesis</keyword>
<keyword id="KW-0694">RNA-binding</keyword>
<keyword id="KW-0820">tRNA-binding</keyword>
<keyword id="KW-0862">Zinc</keyword>
<evidence type="ECO:0000255" key="1">
    <source>
        <dbReference type="HAMAP-Rule" id="MF_00036"/>
    </source>
</evidence>
<name>SYA_PSEF5</name>
<dbReference type="EC" id="6.1.1.7" evidence="1"/>
<dbReference type="EMBL" id="CP000076">
    <property type="protein sequence ID" value="AAY93753.1"/>
    <property type="molecule type" value="Genomic_DNA"/>
</dbReference>
<dbReference type="RefSeq" id="WP_011062762.1">
    <property type="nucleotide sequence ID" value="NC_004129.6"/>
</dbReference>
<dbReference type="SMR" id="Q4K843"/>
<dbReference type="STRING" id="220664.PFL_4506"/>
<dbReference type="KEGG" id="pfl:PFL_4506"/>
<dbReference type="PATRIC" id="fig|220664.5.peg.4607"/>
<dbReference type="eggNOG" id="COG0013">
    <property type="taxonomic scope" value="Bacteria"/>
</dbReference>
<dbReference type="HOGENOM" id="CLU_004485_1_1_6"/>
<dbReference type="Proteomes" id="UP000008540">
    <property type="component" value="Chromosome"/>
</dbReference>
<dbReference type="GO" id="GO:0005829">
    <property type="term" value="C:cytosol"/>
    <property type="evidence" value="ECO:0007669"/>
    <property type="project" value="TreeGrafter"/>
</dbReference>
<dbReference type="GO" id="GO:0004813">
    <property type="term" value="F:alanine-tRNA ligase activity"/>
    <property type="evidence" value="ECO:0007669"/>
    <property type="project" value="UniProtKB-UniRule"/>
</dbReference>
<dbReference type="GO" id="GO:0002161">
    <property type="term" value="F:aminoacyl-tRNA deacylase activity"/>
    <property type="evidence" value="ECO:0007669"/>
    <property type="project" value="TreeGrafter"/>
</dbReference>
<dbReference type="GO" id="GO:0005524">
    <property type="term" value="F:ATP binding"/>
    <property type="evidence" value="ECO:0007669"/>
    <property type="project" value="UniProtKB-UniRule"/>
</dbReference>
<dbReference type="GO" id="GO:0000049">
    <property type="term" value="F:tRNA binding"/>
    <property type="evidence" value="ECO:0007669"/>
    <property type="project" value="UniProtKB-KW"/>
</dbReference>
<dbReference type="GO" id="GO:0008270">
    <property type="term" value="F:zinc ion binding"/>
    <property type="evidence" value="ECO:0007669"/>
    <property type="project" value="UniProtKB-UniRule"/>
</dbReference>
<dbReference type="GO" id="GO:0006419">
    <property type="term" value="P:alanyl-tRNA aminoacylation"/>
    <property type="evidence" value="ECO:0007669"/>
    <property type="project" value="UniProtKB-UniRule"/>
</dbReference>
<dbReference type="GO" id="GO:0045892">
    <property type="term" value="P:negative regulation of DNA-templated transcription"/>
    <property type="evidence" value="ECO:0007669"/>
    <property type="project" value="TreeGrafter"/>
</dbReference>
<dbReference type="CDD" id="cd00673">
    <property type="entry name" value="AlaRS_core"/>
    <property type="match status" value="1"/>
</dbReference>
<dbReference type="FunFam" id="2.40.30.130:FF:000001">
    <property type="entry name" value="Alanine--tRNA ligase"/>
    <property type="match status" value="1"/>
</dbReference>
<dbReference type="FunFam" id="3.10.310.40:FF:000001">
    <property type="entry name" value="Alanine--tRNA ligase"/>
    <property type="match status" value="1"/>
</dbReference>
<dbReference type="FunFam" id="3.30.54.20:FF:000001">
    <property type="entry name" value="Alanine--tRNA ligase"/>
    <property type="match status" value="1"/>
</dbReference>
<dbReference type="FunFam" id="3.30.930.10:FF:000004">
    <property type="entry name" value="Alanine--tRNA ligase"/>
    <property type="match status" value="1"/>
</dbReference>
<dbReference type="FunFam" id="3.30.980.10:FF:000004">
    <property type="entry name" value="Alanine--tRNA ligase, cytoplasmic"/>
    <property type="match status" value="1"/>
</dbReference>
<dbReference type="Gene3D" id="2.40.30.130">
    <property type="match status" value="1"/>
</dbReference>
<dbReference type="Gene3D" id="3.10.310.40">
    <property type="match status" value="1"/>
</dbReference>
<dbReference type="Gene3D" id="3.30.54.20">
    <property type="match status" value="1"/>
</dbReference>
<dbReference type="Gene3D" id="6.10.250.550">
    <property type="match status" value="1"/>
</dbReference>
<dbReference type="Gene3D" id="3.30.930.10">
    <property type="entry name" value="Bira Bifunctional Protein, Domain 2"/>
    <property type="match status" value="1"/>
</dbReference>
<dbReference type="Gene3D" id="3.30.980.10">
    <property type="entry name" value="Threonyl-trna Synthetase, Chain A, domain 2"/>
    <property type="match status" value="1"/>
</dbReference>
<dbReference type="HAMAP" id="MF_00036_B">
    <property type="entry name" value="Ala_tRNA_synth_B"/>
    <property type="match status" value="1"/>
</dbReference>
<dbReference type="InterPro" id="IPR045864">
    <property type="entry name" value="aa-tRNA-synth_II/BPL/LPL"/>
</dbReference>
<dbReference type="InterPro" id="IPR002318">
    <property type="entry name" value="Ala-tRNA-lgiase_IIc"/>
</dbReference>
<dbReference type="InterPro" id="IPR018162">
    <property type="entry name" value="Ala-tRNA-ligase_IIc_anticod-bd"/>
</dbReference>
<dbReference type="InterPro" id="IPR018165">
    <property type="entry name" value="Ala-tRNA-synth_IIc_core"/>
</dbReference>
<dbReference type="InterPro" id="IPR018164">
    <property type="entry name" value="Ala-tRNA-synth_IIc_N"/>
</dbReference>
<dbReference type="InterPro" id="IPR050058">
    <property type="entry name" value="Ala-tRNA_ligase"/>
</dbReference>
<dbReference type="InterPro" id="IPR023033">
    <property type="entry name" value="Ala_tRNA_ligase_euk/bac"/>
</dbReference>
<dbReference type="InterPro" id="IPR003156">
    <property type="entry name" value="DHHA1_dom"/>
</dbReference>
<dbReference type="InterPro" id="IPR018163">
    <property type="entry name" value="Thr/Ala-tRNA-synth_IIc_edit"/>
</dbReference>
<dbReference type="InterPro" id="IPR009000">
    <property type="entry name" value="Transl_B-barrel_sf"/>
</dbReference>
<dbReference type="InterPro" id="IPR012947">
    <property type="entry name" value="tRNA_SAD"/>
</dbReference>
<dbReference type="NCBIfam" id="TIGR00344">
    <property type="entry name" value="alaS"/>
    <property type="match status" value="1"/>
</dbReference>
<dbReference type="PANTHER" id="PTHR11777:SF9">
    <property type="entry name" value="ALANINE--TRNA LIGASE, CYTOPLASMIC"/>
    <property type="match status" value="1"/>
</dbReference>
<dbReference type="PANTHER" id="PTHR11777">
    <property type="entry name" value="ALANYL-TRNA SYNTHETASE"/>
    <property type="match status" value="1"/>
</dbReference>
<dbReference type="Pfam" id="PF02272">
    <property type="entry name" value="DHHA1"/>
    <property type="match status" value="1"/>
</dbReference>
<dbReference type="Pfam" id="PF01411">
    <property type="entry name" value="tRNA-synt_2c"/>
    <property type="match status" value="1"/>
</dbReference>
<dbReference type="Pfam" id="PF07973">
    <property type="entry name" value="tRNA_SAD"/>
    <property type="match status" value="1"/>
</dbReference>
<dbReference type="PRINTS" id="PR00980">
    <property type="entry name" value="TRNASYNTHALA"/>
</dbReference>
<dbReference type="SMART" id="SM00863">
    <property type="entry name" value="tRNA_SAD"/>
    <property type="match status" value="1"/>
</dbReference>
<dbReference type="SUPFAM" id="SSF55681">
    <property type="entry name" value="Class II aaRS and biotin synthetases"/>
    <property type="match status" value="1"/>
</dbReference>
<dbReference type="SUPFAM" id="SSF101353">
    <property type="entry name" value="Putative anticodon-binding domain of alanyl-tRNA synthetase (AlaRS)"/>
    <property type="match status" value="1"/>
</dbReference>
<dbReference type="SUPFAM" id="SSF55186">
    <property type="entry name" value="ThrRS/AlaRS common domain"/>
    <property type="match status" value="1"/>
</dbReference>
<dbReference type="SUPFAM" id="SSF50447">
    <property type="entry name" value="Translation proteins"/>
    <property type="match status" value="1"/>
</dbReference>
<dbReference type="PROSITE" id="PS50860">
    <property type="entry name" value="AA_TRNA_LIGASE_II_ALA"/>
    <property type="match status" value="1"/>
</dbReference>
<protein>
    <recommendedName>
        <fullName evidence="1">Alanine--tRNA ligase</fullName>
        <ecNumber evidence="1">6.1.1.7</ecNumber>
    </recommendedName>
    <alternativeName>
        <fullName evidence="1">Alanyl-tRNA synthetase</fullName>
        <shortName evidence="1">AlaRS</shortName>
    </alternativeName>
</protein>